<keyword id="KW-0145">Chemotaxis</keyword>
<keyword id="KW-0963">Cytoplasm</keyword>
<keyword id="KW-0283">Flagellar rotation</keyword>
<keyword id="KW-0378">Hydrolase</keyword>
<keyword id="KW-0904">Protein phosphatase</keyword>
<protein>
    <recommendedName>
        <fullName>Protein phosphatase CheZ</fullName>
        <ecNumber>3.1.3.-</ecNumber>
    </recommendedName>
    <alternativeName>
        <fullName>Chemotaxis protein CheZ</fullName>
    </alternativeName>
</protein>
<proteinExistence type="inferred from homology"/>
<sequence length="214" mass="23934">MMQPSIKPADEGSAGDIIARIGSLTRMLRDSLRELGLDQAIAEAAEAIPDARDRLDYVVQMTAQAAERALNSVEASQPHQDAMEKEAKALTQRWDEWFDNPIELSDARELVTDTRQFLRDVPGHTSFTNAQLLDIMMAQDFQDLTGQVIKRMMDVIQEIERQLLMVLLENIPEQSARPKRENESLLNGPQVDTSKAGVVASQEQVDDLLDSLGF</sequence>
<dbReference type="EC" id="3.1.3.-"/>
<dbReference type="EMBL" id="AL513382">
    <property type="protein sequence ID" value="CAD05666.1"/>
    <property type="molecule type" value="Genomic_DNA"/>
</dbReference>
<dbReference type="EMBL" id="AE014613">
    <property type="protein sequence ID" value="AAO68635.1"/>
    <property type="molecule type" value="Genomic_DNA"/>
</dbReference>
<dbReference type="RefSeq" id="NP_456481.1">
    <property type="nucleotide sequence ID" value="NC_003198.1"/>
</dbReference>
<dbReference type="RefSeq" id="WP_000983587.1">
    <property type="nucleotide sequence ID" value="NZ_WSUR01000004.1"/>
</dbReference>
<dbReference type="SMR" id="Q8Z5V3"/>
<dbReference type="STRING" id="220341.gene:17586031"/>
<dbReference type="KEGG" id="stt:t0962"/>
<dbReference type="KEGG" id="sty:STY2124"/>
<dbReference type="PATRIC" id="fig|220341.7.peg.2135"/>
<dbReference type="eggNOG" id="COG3143">
    <property type="taxonomic scope" value="Bacteria"/>
</dbReference>
<dbReference type="HOGENOM" id="CLU_080718_1_0_6"/>
<dbReference type="OMA" id="DWGRFMR"/>
<dbReference type="OrthoDB" id="9773007at2"/>
<dbReference type="Proteomes" id="UP000000541">
    <property type="component" value="Chromosome"/>
</dbReference>
<dbReference type="Proteomes" id="UP000002670">
    <property type="component" value="Chromosome"/>
</dbReference>
<dbReference type="GO" id="GO:0009288">
    <property type="term" value="C:bacterial-type flagellum"/>
    <property type="evidence" value="ECO:0007669"/>
    <property type="project" value="InterPro"/>
</dbReference>
<dbReference type="GO" id="GO:0005737">
    <property type="term" value="C:cytoplasm"/>
    <property type="evidence" value="ECO:0007669"/>
    <property type="project" value="UniProtKB-SubCell"/>
</dbReference>
<dbReference type="GO" id="GO:0004721">
    <property type="term" value="F:phosphoprotein phosphatase activity"/>
    <property type="evidence" value="ECO:0007669"/>
    <property type="project" value="UniProtKB-KW"/>
</dbReference>
<dbReference type="GO" id="GO:0097588">
    <property type="term" value="P:archaeal or bacterial-type flagellum-dependent cell motility"/>
    <property type="evidence" value="ECO:0007669"/>
    <property type="project" value="UniProtKB-KW"/>
</dbReference>
<dbReference type="GO" id="GO:0006935">
    <property type="term" value="P:chemotaxis"/>
    <property type="evidence" value="ECO:0007669"/>
    <property type="project" value="UniProtKB-KW"/>
</dbReference>
<dbReference type="GO" id="GO:0050920">
    <property type="term" value="P:regulation of chemotaxis"/>
    <property type="evidence" value="ECO:0007669"/>
    <property type="project" value="InterPro"/>
</dbReference>
<dbReference type="FunFam" id="1.10.287.500:FF:000001">
    <property type="entry name" value="Protein phosphatase CheZ"/>
    <property type="match status" value="1"/>
</dbReference>
<dbReference type="Gene3D" id="1.10.287.500">
    <property type="entry name" value="Helix hairpin bin"/>
    <property type="match status" value="1"/>
</dbReference>
<dbReference type="Gene3D" id="1.20.5.590">
    <property type="entry name" value="Single helix bin"/>
    <property type="match status" value="1"/>
</dbReference>
<dbReference type="InterPro" id="IPR007439">
    <property type="entry name" value="Chemotax_Pase_CheZ"/>
</dbReference>
<dbReference type="InterPro" id="IPR050992">
    <property type="entry name" value="CheZ_family_phosphatases"/>
</dbReference>
<dbReference type="NCBIfam" id="NF008368">
    <property type="entry name" value="PRK11166.1"/>
    <property type="match status" value="1"/>
</dbReference>
<dbReference type="PANTHER" id="PTHR43693">
    <property type="entry name" value="PROTEIN PHOSPHATASE CHEZ"/>
    <property type="match status" value="1"/>
</dbReference>
<dbReference type="PANTHER" id="PTHR43693:SF1">
    <property type="entry name" value="PROTEIN PHOSPHATASE CHEZ"/>
    <property type="match status" value="1"/>
</dbReference>
<dbReference type="Pfam" id="PF04344">
    <property type="entry name" value="CheZ"/>
    <property type="match status" value="1"/>
</dbReference>
<dbReference type="PIRSF" id="PIRSF002884">
    <property type="entry name" value="CheZ"/>
    <property type="match status" value="1"/>
</dbReference>
<dbReference type="SUPFAM" id="SSF75708">
    <property type="entry name" value="Chemotaxis phosphatase CheZ"/>
    <property type="match status" value="1"/>
</dbReference>
<accession>Q8Z5V3</accession>
<accession>Q7CAL8</accession>
<name>CHEZ_SALTI</name>
<feature type="chain" id="PRO_0000410782" description="Protein phosphatase CheZ">
    <location>
        <begin position="1"/>
        <end position="214"/>
    </location>
</feature>
<feature type="region of interest" description="Disordered" evidence="2">
    <location>
        <begin position="176"/>
        <end position="199"/>
    </location>
</feature>
<feature type="compositionally biased region" description="Polar residues" evidence="2">
    <location>
        <begin position="184"/>
        <end position="193"/>
    </location>
</feature>
<feature type="site" description="Enhances dephosphorylation of CheY-P" evidence="1">
    <location>
        <position position="147"/>
    </location>
</feature>
<comment type="function">
    <text evidence="1">Plays an important role in bacterial chemotaxis signal transduction pathway by accelerating the dephosphorylation of phosphorylated CheY (CheY-P).</text>
</comment>
<comment type="subunit">
    <text evidence="1">Homodimer.</text>
</comment>
<comment type="subcellular location">
    <subcellularLocation>
        <location evidence="1">Cytoplasm</location>
    </subcellularLocation>
</comment>
<comment type="similarity">
    <text evidence="3">Belongs to the CheZ family.</text>
</comment>
<reference key="1">
    <citation type="journal article" date="2001" name="Nature">
        <title>Complete genome sequence of a multiple drug resistant Salmonella enterica serovar Typhi CT18.</title>
        <authorList>
            <person name="Parkhill J."/>
            <person name="Dougan G."/>
            <person name="James K.D."/>
            <person name="Thomson N.R."/>
            <person name="Pickard D."/>
            <person name="Wain J."/>
            <person name="Churcher C.M."/>
            <person name="Mungall K.L."/>
            <person name="Bentley S.D."/>
            <person name="Holden M.T.G."/>
            <person name="Sebaihia M."/>
            <person name="Baker S."/>
            <person name="Basham D."/>
            <person name="Brooks K."/>
            <person name="Chillingworth T."/>
            <person name="Connerton P."/>
            <person name="Cronin A."/>
            <person name="Davis P."/>
            <person name="Davies R.M."/>
            <person name="Dowd L."/>
            <person name="White N."/>
            <person name="Farrar J."/>
            <person name="Feltwell T."/>
            <person name="Hamlin N."/>
            <person name="Haque A."/>
            <person name="Hien T.T."/>
            <person name="Holroyd S."/>
            <person name="Jagels K."/>
            <person name="Krogh A."/>
            <person name="Larsen T.S."/>
            <person name="Leather S."/>
            <person name="Moule S."/>
            <person name="O'Gaora P."/>
            <person name="Parry C."/>
            <person name="Quail M.A."/>
            <person name="Rutherford K.M."/>
            <person name="Simmonds M."/>
            <person name="Skelton J."/>
            <person name="Stevens K."/>
            <person name="Whitehead S."/>
            <person name="Barrell B.G."/>
        </authorList>
    </citation>
    <scope>NUCLEOTIDE SEQUENCE [LARGE SCALE GENOMIC DNA]</scope>
    <source>
        <strain>CT18</strain>
    </source>
</reference>
<reference key="2">
    <citation type="journal article" date="2003" name="J. Bacteriol.">
        <title>Comparative genomics of Salmonella enterica serovar Typhi strains Ty2 and CT18.</title>
        <authorList>
            <person name="Deng W."/>
            <person name="Liou S.-R."/>
            <person name="Plunkett G. III"/>
            <person name="Mayhew G.F."/>
            <person name="Rose D.J."/>
            <person name="Burland V."/>
            <person name="Kodoyianni V."/>
            <person name="Schwartz D.C."/>
            <person name="Blattner F.R."/>
        </authorList>
    </citation>
    <scope>NUCLEOTIDE SEQUENCE [LARGE SCALE GENOMIC DNA]</scope>
    <source>
        <strain>ATCC 700931 / Ty2</strain>
    </source>
</reference>
<organism>
    <name type="scientific">Salmonella typhi</name>
    <dbReference type="NCBI Taxonomy" id="90370"/>
    <lineage>
        <taxon>Bacteria</taxon>
        <taxon>Pseudomonadati</taxon>
        <taxon>Pseudomonadota</taxon>
        <taxon>Gammaproteobacteria</taxon>
        <taxon>Enterobacterales</taxon>
        <taxon>Enterobacteriaceae</taxon>
        <taxon>Salmonella</taxon>
    </lineage>
</organism>
<gene>
    <name type="primary">cheZ</name>
    <name type="ordered locus">STY2124</name>
    <name type="ordered locus">t0962</name>
</gene>
<evidence type="ECO:0000250" key="1"/>
<evidence type="ECO:0000256" key="2">
    <source>
        <dbReference type="SAM" id="MobiDB-lite"/>
    </source>
</evidence>
<evidence type="ECO:0000305" key="3"/>